<protein>
    <recommendedName>
        <fullName evidence="1">UPF0145 protein HDEF_1024</fullName>
    </recommendedName>
</protein>
<comment type="similarity">
    <text evidence="1">Belongs to the UPF0145 family.</text>
</comment>
<proteinExistence type="inferred from homology"/>
<name>Y1024_HAMD5</name>
<accession>C4K578</accession>
<dbReference type="EMBL" id="CP001277">
    <property type="protein sequence ID" value="ACQ67721.1"/>
    <property type="molecule type" value="Genomic_DNA"/>
</dbReference>
<dbReference type="RefSeq" id="WP_015873522.1">
    <property type="nucleotide sequence ID" value="NC_012751.1"/>
</dbReference>
<dbReference type="SMR" id="C4K578"/>
<dbReference type="GeneID" id="66260814"/>
<dbReference type="KEGG" id="hde:HDEF_1024"/>
<dbReference type="eggNOG" id="COG0393">
    <property type="taxonomic scope" value="Bacteria"/>
</dbReference>
<dbReference type="HOGENOM" id="CLU_117144_3_2_6"/>
<dbReference type="Proteomes" id="UP000002334">
    <property type="component" value="Chromosome"/>
</dbReference>
<dbReference type="Gene3D" id="3.30.110.70">
    <property type="entry name" value="Hypothetical protein apc22750. Chain B"/>
    <property type="match status" value="1"/>
</dbReference>
<dbReference type="HAMAP" id="MF_00338">
    <property type="entry name" value="UPF0145"/>
    <property type="match status" value="1"/>
</dbReference>
<dbReference type="InterPro" id="IPR035439">
    <property type="entry name" value="UPF0145_dom_sf"/>
</dbReference>
<dbReference type="InterPro" id="IPR002765">
    <property type="entry name" value="UPF0145_YbjQ-like"/>
</dbReference>
<dbReference type="NCBIfam" id="NF002776">
    <property type="entry name" value="PRK02877.1"/>
    <property type="match status" value="1"/>
</dbReference>
<dbReference type="PANTHER" id="PTHR34068">
    <property type="entry name" value="UPF0145 PROTEIN YBJQ"/>
    <property type="match status" value="1"/>
</dbReference>
<dbReference type="PANTHER" id="PTHR34068:SF1">
    <property type="entry name" value="UPF0145 PROTEIN YBJQ"/>
    <property type="match status" value="1"/>
</dbReference>
<dbReference type="Pfam" id="PF01906">
    <property type="entry name" value="YbjQ_1"/>
    <property type="match status" value="1"/>
</dbReference>
<dbReference type="SUPFAM" id="SSF117782">
    <property type="entry name" value="YbjQ-like"/>
    <property type="match status" value="1"/>
</dbReference>
<gene>
    <name type="ordered locus">HDEF_1024</name>
</gene>
<reference key="1">
    <citation type="journal article" date="2009" name="Proc. Natl. Acad. Sci. U.S.A.">
        <title>Hamiltonella defensa, genome evolution of protective bacterial endosymbiont from pathogenic ancestors.</title>
        <authorList>
            <person name="Degnan P.H."/>
            <person name="Yu Y."/>
            <person name="Sisneros N."/>
            <person name="Wing R.A."/>
            <person name="Moran N.A."/>
        </authorList>
    </citation>
    <scope>NUCLEOTIDE SEQUENCE [LARGE SCALE GENOMIC DNA]</scope>
    <source>
        <strain>5AT</strain>
    </source>
</reference>
<sequence>MKNTTTPTLQGYDIREYLGIVTGEAILGANIFKDLFAGIRDFVGGRSNAYEKELIKARKIAFNEMNSTAESLGANAVVGINIDYEVVGTSNSMLMVSIYGTAVKIFSL</sequence>
<feature type="chain" id="PRO_1000205240" description="UPF0145 protein HDEF_1024">
    <location>
        <begin position="1"/>
        <end position="108"/>
    </location>
</feature>
<evidence type="ECO:0000255" key="1">
    <source>
        <dbReference type="HAMAP-Rule" id="MF_00338"/>
    </source>
</evidence>
<organism>
    <name type="scientific">Hamiltonella defensa subsp. Acyrthosiphon pisum (strain 5AT)</name>
    <dbReference type="NCBI Taxonomy" id="572265"/>
    <lineage>
        <taxon>Bacteria</taxon>
        <taxon>Pseudomonadati</taxon>
        <taxon>Pseudomonadota</taxon>
        <taxon>Gammaproteobacteria</taxon>
        <taxon>Enterobacterales</taxon>
        <taxon>Enterobacteriaceae</taxon>
        <taxon>aphid secondary symbionts</taxon>
        <taxon>Candidatus Hamiltonella</taxon>
    </lineage>
</organism>